<organism>
    <name type="scientific">Aliivibrio salmonicida (strain LFI1238)</name>
    <name type="common">Vibrio salmonicida (strain LFI1238)</name>
    <dbReference type="NCBI Taxonomy" id="316275"/>
    <lineage>
        <taxon>Bacteria</taxon>
        <taxon>Pseudomonadati</taxon>
        <taxon>Pseudomonadota</taxon>
        <taxon>Gammaproteobacteria</taxon>
        <taxon>Vibrionales</taxon>
        <taxon>Vibrionaceae</taxon>
        <taxon>Aliivibrio</taxon>
    </lineage>
</organism>
<dbReference type="EC" id="4.1.1.65" evidence="1"/>
<dbReference type="EMBL" id="FM178379">
    <property type="protein sequence ID" value="CAQ80469.1"/>
    <property type="molecule type" value="Genomic_DNA"/>
</dbReference>
<dbReference type="RefSeq" id="WP_012551221.1">
    <property type="nucleotide sequence ID" value="NC_011312.1"/>
</dbReference>
<dbReference type="SMR" id="B6EMR5"/>
<dbReference type="KEGG" id="vsa:VSAL_I2785"/>
<dbReference type="eggNOG" id="COG0688">
    <property type="taxonomic scope" value="Bacteria"/>
</dbReference>
<dbReference type="HOGENOM" id="CLU_029061_4_1_6"/>
<dbReference type="UniPathway" id="UPA00558">
    <property type="reaction ID" value="UER00616"/>
</dbReference>
<dbReference type="Proteomes" id="UP000001730">
    <property type="component" value="Chromosome 1"/>
</dbReference>
<dbReference type="GO" id="GO:0005886">
    <property type="term" value="C:plasma membrane"/>
    <property type="evidence" value="ECO:0007669"/>
    <property type="project" value="UniProtKB-SubCell"/>
</dbReference>
<dbReference type="GO" id="GO:0004609">
    <property type="term" value="F:phosphatidylserine decarboxylase activity"/>
    <property type="evidence" value="ECO:0007669"/>
    <property type="project" value="UniProtKB-UniRule"/>
</dbReference>
<dbReference type="GO" id="GO:0006646">
    <property type="term" value="P:phosphatidylethanolamine biosynthetic process"/>
    <property type="evidence" value="ECO:0007669"/>
    <property type="project" value="UniProtKB-UniRule"/>
</dbReference>
<dbReference type="HAMAP" id="MF_00662">
    <property type="entry name" value="PS_decarb_PSD_B_type1"/>
    <property type="match status" value="1"/>
</dbReference>
<dbReference type="InterPro" id="IPR003817">
    <property type="entry name" value="PS_Dcarbxylase"/>
</dbReference>
<dbReference type="InterPro" id="IPR033177">
    <property type="entry name" value="PSD-B"/>
</dbReference>
<dbReference type="InterPro" id="IPR033178">
    <property type="entry name" value="PSD_type1_pro"/>
</dbReference>
<dbReference type="NCBIfam" id="TIGR00163">
    <property type="entry name" value="PS_decarb"/>
    <property type="match status" value="1"/>
</dbReference>
<dbReference type="PANTHER" id="PTHR10067">
    <property type="entry name" value="PHOSPHATIDYLSERINE DECARBOXYLASE"/>
    <property type="match status" value="1"/>
</dbReference>
<dbReference type="PANTHER" id="PTHR10067:SF6">
    <property type="entry name" value="PHOSPHATIDYLSERINE DECARBOXYLASE PROENZYME, MITOCHONDRIAL"/>
    <property type="match status" value="1"/>
</dbReference>
<dbReference type="Pfam" id="PF02666">
    <property type="entry name" value="PS_Dcarbxylase"/>
    <property type="match status" value="1"/>
</dbReference>
<reference key="1">
    <citation type="journal article" date="2008" name="BMC Genomics">
        <title>The genome sequence of the fish pathogen Aliivibrio salmonicida strain LFI1238 shows extensive evidence of gene decay.</title>
        <authorList>
            <person name="Hjerde E."/>
            <person name="Lorentzen M.S."/>
            <person name="Holden M.T."/>
            <person name="Seeger K."/>
            <person name="Paulsen S."/>
            <person name="Bason N."/>
            <person name="Churcher C."/>
            <person name="Harris D."/>
            <person name="Norbertczak H."/>
            <person name="Quail M.A."/>
            <person name="Sanders S."/>
            <person name="Thurston S."/>
            <person name="Parkhill J."/>
            <person name="Willassen N.P."/>
            <person name="Thomson N.R."/>
        </authorList>
    </citation>
    <scope>NUCLEOTIDE SEQUENCE [LARGE SCALE GENOMIC DNA]</scope>
    <source>
        <strain>LFI1238</strain>
    </source>
</reference>
<keyword id="KW-1003">Cell membrane</keyword>
<keyword id="KW-0210">Decarboxylase</keyword>
<keyword id="KW-0444">Lipid biosynthesis</keyword>
<keyword id="KW-0443">Lipid metabolism</keyword>
<keyword id="KW-0456">Lyase</keyword>
<keyword id="KW-0472">Membrane</keyword>
<keyword id="KW-0594">Phospholipid biosynthesis</keyword>
<keyword id="KW-1208">Phospholipid metabolism</keyword>
<keyword id="KW-0670">Pyruvate</keyword>
<keyword id="KW-0865">Zymogen</keyword>
<name>PSD_ALISL</name>
<feature type="chain" id="PRO_1000131332" description="Phosphatidylserine decarboxylase beta chain" evidence="1">
    <location>
        <begin position="1"/>
        <end position="252"/>
    </location>
</feature>
<feature type="chain" id="PRO_1000131333" description="Phosphatidylserine decarboxylase alpha chain" evidence="1">
    <location>
        <begin position="253"/>
        <end position="287"/>
    </location>
</feature>
<feature type="active site" description="Charge relay system; for autoendoproteolytic cleavage activity" evidence="1">
    <location>
        <position position="90"/>
    </location>
</feature>
<feature type="active site" description="Charge relay system; for autoendoproteolytic cleavage activity" evidence="1">
    <location>
        <position position="147"/>
    </location>
</feature>
<feature type="active site" description="Charge relay system; for autoendoproteolytic cleavage activity" evidence="1">
    <location>
        <position position="253"/>
    </location>
</feature>
<feature type="active site" description="Schiff-base intermediate with substrate; via pyruvic acid; for decarboxylase activity" evidence="1">
    <location>
        <position position="253"/>
    </location>
</feature>
<feature type="site" description="Cleavage (non-hydrolytic); by autocatalysis" evidence="1">
    <location>
        <begin position="252"/>
        <end position="253"/>
    </location>
</feature>
<feature type="modified residue" description="Pyruvic acid (Ser); by autocatalysis" evidence="1">
    <location>
        <position position="253"/>
    </location>
</feature>
<protein>
    <recommendedName>
        <fullName evidence="1">Phosphatidylserine decarboxylase proenzyme</fullName>
        <ecNumber evidence="1">4.1.1.65</ecNumber>
    </recommendedName>
    <component>
        <recommendedName>
            <fullName evidence="1">Phosphatidylserine decarboxylase alpha chain</fullName>
        </recommendedName>
    </component>
    <component>
        <recommendedName>
            <fullName evidence="1">Phosphatidylserine decarboxylase beta chain</fullName>
        </recommendedName>
    </component>
</protein>
<evidence type="ECO:0000255" key="1">
    <source>
        <dbReference type="HAMAP-Rule" id="MF_00662"/>
    </source>
</evidence>
<accession>B6EMR5</accession>
<gene>
    <name evidence="1" type="primary">psd</name>
    <name type="ordered locus">VSAL_I2785</name>
</gene>
<comment type="function">
    <text evidence="1">Catalyzes the formation of phosphatidylethanolamine (PtdEtn) from phosphatidylserine (PtdSer).</text>
</comment>
<comment type="catalytic activity">
    <reaction evidence="1">
        <text>a 1,2-diacyl-sn-glycero-3-phospho-L-serine + H(+) = a 1,2-diacyl-sn-glycero-3-phosphoethanolamine + CO2</text>
        <dbReference type="Rhea" id="RHEA:20828"/>
        <dbReference type="ChEBI" id="CHEBI:15378"/>
        <dbReference type="ChEBI" id="CHEBI:16526"/>
        <dbReference type="ChEBI" id="CHEBI:57262"/>
        <dbReference type="ChEBI" id="CHEBI:64612"/>
        <dbReference type="EC" id="4.1.1.65"/>
    </reaction>
</comment>
<comment type="cofactor">
    <cofactor evidence="1">
        <name>pyruvate</name>
        <dbReference type="ChEBI" id="CHEBI:15361"/>
    </cofactor>
    <text evidence="1">Binds 1 pyruvoyl group covalently per subunit.</text>
</comment>
<comment type="pathway">
    <text evidence="1">Phospholipid metabolism; phosphatidylethanolamine biosynthesis; phosphatidylethanolamine from CDP-diacylglycerol: step 2/2.</text>
</comment>
<comment type="subunit">
    <text evidence="1">Heterodimer of a large membrane-associated beta subunit and a small pyruvoyl-containing alpha subunit.</text>
</comment>
<comment type="subcellular location">
    <subcellularLocation>
        <location evidence="1">Cell membrane</location>
        <topology evidence="1">Peripheral membrane protein</topology>
    </subcellularLocation>
</comment>
<comment type="PTM">
    <text evidence="1">Is synthesized initially as an inactive proenzyme. Formation of the active enzyme involves a self-maturation process in which the active site pyruvoyl group is generated from an internal serine residue via an autocatalytic post-translational modification. Two non-identical subunits are generated from the proenzyme in this reaction, and the pyruvate is formed at the N-terminus of the alpha chain, which is derived from the carboxyl end of the proenzyme. The autoendoproteolytic cleavage occurs by a canonical serine protease mechanism, in which the side chain hydroxyl group of the serine supplies its oxygen atom to form the C-terminus of the beta chain, while the remainder of the serine residue undergoes an oxidative deamination to produce ammonia and the pyruvoyl prosthetic group on the alpha chain. During this reaction, the Ser that is part of the protease active site of the proenzyme becomes the pyruvoyl prosthetic group, which constitutes an essential element of the active site of the mature decarboxylase.</text>
</comment>
<comment type="similarity">
    <text evidence="1">Belongs to the phosphatidylserine decarboxylase family. PSD-B subfamily. Prokaryotic type I sub-subfamily.</text>
</comment>
<proteinExistence type="inferred from homology"/>
<sequence length="287" mass="31577">MSDNLKIGLQYLTPKHALTRLAGKLASAKMGWLTTAVIKWFIKQYNVEMSEAKNPDPEAYSTFNNFFVRELEDGARPINDDENVISHPADACVSQFGPITDGQLVQAKGHVYSAQELLGGDAELAEEFIGGEFATLYLSPRDYHRVHMPCDATLRKMVYVPGDLFSVNPLTAENVPNLFARNERVVCIFDTEFGPMAQVLVGATIVGSIETTWADTVTPPTGPAVKTWHYPLSGDDVICFKKGEEMGRFKLGSTVINLFAPNSITFDESMKNGVPTRLGTPFAHIAK</sequence>